<evidence type="ECO:0000255" key="1">
    <source>
        <dbReference type="HAMAP-Rule" id="MF_00532"/>
    </source>
</evidence>
<evidence type="ECO:0000256" key="2">
    <source>
        <dbReference type="SAM" id="MobiDB-lite"/>
    </source>
</evidence>
<evidence type="ECO:0000305" key="3"/>
<reference key="1">
    <citation type="journal article" date="2006" name="Proc. Natl. Acad. Sci. U.S.A.">
        <title>Genome sequence of Synechococcus CC9311: insights into adaptation to a coastal environment.</title>
        <authorList>
            <person name="Palenik B."/>
            <person name="Ren Q."/>
            <person name="Dupont C.L."/>
            <person name="Myers G.S."/>
            <person name="Heidelberg J.F."/>
            <person name="Badger J.H."/>
            <person name="Madupu R."/>
            <person name="Nelson W.C."/>
            <person name="Brinkac L.M."/>
            <person name="Dodson R.J."/>
            <person name="Durkin A.S."/>
            <person name="Daugherty S.C."/>
            <person name="Sullivan S.A."/>
            <person name="Khouri H."/>
            <person name="Mohamoud Y."/>
            <person name="Halpin R."/>
            <person name="Paulsen I.T."/>
        </authorList>
    </citation>
    <scope>NUCLEOTIDE SEQUENCE [LARGE SCALE GENOMIC DNA]</scope>
    <source>
        <strain>CC9311</strain>
    </source>
</reference>
<keyword id="KW-1185">Reference proteome</keyword>
<keyword id="KW-0687">Ribonucleoprotein</keyword>
<keyword id="KW-0689">Ribosomal protein</keyword>
<feature type="chain" id="PRO_1000051354" description="Small ribosomal subunit protein uS9">
    <location>
        <begin position="1"/>
        <end position="135"/>
    </location>
</feature>
<feature type="region of interest" description="Disordered" evidence="2">
    <location>
        <begin position="102"/>
        <end position="135"/>
    </location>
</feature>
<feature type="compositionally biased region" description="Basic and acidic residues" evidence="2">
    <location>
        <begin position="102"/>
        <end position="115"/>
    </location>
</feature>
<feature type="compositionally biased region" description="Basic residues" evidence="2">
    <location>
        <begin position="116"/>
        <end position="135"/>
    </location>
</feature>
<name>RS9_SYNS3</name>
<dbReference type="EMBL" id="CP000435">
    <property type="protein sequence ID" value="ABI45794.1"/>
    <property type="molecule type" value="Genomic_DNA"/>
</dbReference>
<dbReference type="RefSeq" id="WP_011618378.1">
    <property type="nucleotide sequence ID" value="NC_008319.1"/>
</dbReference>
<dbReference type="SMR" id="Q0ID32"/>
<dbReference type="STRING" id="64471.sync_0410"/>
<dbReference type="KEGG" id="syg:sync_0410"/>
<dbReference type="eggNOG" id="COG0103">
    <property type="taxonomic scope" value="Bacteria"/>
</dbReference>
<dbReference type="HOGENOM" id="CLU_046483_2_1_3"/>
<dbReference type="OrthoDB" id="9803965at2"/>
<dbReference type="Proteomes" id="UP000001961">
    <property type="component" value="Chromosome"/>
</dbReference>
<dbReference type="GO" id="GO:0022627">
    <property type="term" value="C:cytosolic small ribosomal subunit"/>
    <property type="evidence" value="ECO:0007669"/>
    <property type="project" value="TreeGrafter"/>
</dbReference>
<dbReference type="GO" id="GO:0003723">
    <property type="term" value="F:RNA binding"/>
    <property type="evidence" value="ECO:0007669"/>
    <property type="project" value="TreeGrafter"/>
</dbReference>
<dbReference type="GO" id="GO:0003735">
    <property type="term" value="F:structural constituent of ribosome"/>
    <property type="evidence" value="ECO:0007669"/>
    <property type="project" value="InterPro"/>
</dbReference>
<dbReference type="GO" id="GO:0006412">
    <property type="term" value="P:translation"/>
    <property type="evidence" value="ECO:0007669"/>
    <property type="project" value="UniProtKB-UniRule"/>
</dbReference>
<dbReference type="FunFam" id="3.30.230.10:FF:000001">
    <property type="entry name" value="30S ribosomal protein S9"/>
    <property type="match status" value="1"/>
</dbReference>
<dbReference type="Gene3D" id="3.30.230.10">
    <property type="match status" value="1"/>
</dbReference>
<dbReference type="HAMAP" id="MF_00532_B">
    <property type="entry name" value="Ribosomal_uS9_B"/>
    <property type="match status" value="1"/>
</dbReference>
<dbReference type="InterPro" id="IPR020568">
    <property type="entry name" value="Ribosomal_Su5_D2-typ_SF"/>
</dbReference>
<dbReference type="InterPro" id="IPR000754">
    <property type="entry name" value="Ribosomal_uS9"/>
</dbReference>
<dbReference type="InterPro" id="IPR023035">
    <property type="entry name" value="Ribosomal_uS9_bac/plastid"/>
</dbReference>
<dbReference type="InterPro" id="IPR020574">
    <property type="entry name" value="Ribosomal_uS9_CS"/>
</dbReference>
<dbReference type="InterPro" id="IPR014721">
    <property type="entry name" value="Ribsml_uS5_D2-typ_fold_subgr"/>
</dbReference>
<dbReference type="NCBIfam" id="NF001099">
    <property type="entry name" value="PRK00132.1"/>
    <property type="match status" value="1"/>
</dbReference>
<dbReference type="PANTHER" id="PTHR21569">
    <property type="entry name" value="RIBOSOMAL PROTEIN S9"/>
    <property type="match status" value="1"/>
</dbReference>
<dbReference type="PANTHER" id="PTHR21569:SF1">
    <property type="entry name" value="SMALL RIBOSOMAL SUBUNIT PROTEIN US9M"/>
    <property type="match status" value="1"/>
</dbReference>
<dbReference type="Pfam" id="PF00380">
    <property type="entry name" value="Ribosomal_S9"/>
    <property type="match status" value="1"/>
</dbReference>
<dbReference type="SUPFAM" id="SSF54211">
    <property type="entry name" value="Ribosomal protein S5 domain 2-like"/>
    <property type="match status" value="1"/>
</dbReference>
<dbReference type="PROSITE" id="PS00360">
    <property type="entry name" value="RIBOSOMAL_S9"/>
    <property type="match status" value="1"/>
</dbReference>
<gene>
    <name evidence="1" type="primary">rpsI</name>
    <name evidence="1" type="synonym">rps9</name>
    <name type="ordered locus">sync_0410</name>
</gene>
<organism>
    <name type="scientific">Synechococcus sp. (strain CC9311)</name>
    <dbReference type="NCBI Taxonomy" id="64471"/>
    <lineage>
        <taxon>Bacteria</taxon>
        <taxon>Bacillati</taxon>
        <taxon>Cyanobacteriota</taxon>
        <taxon>Cyanophyceae</taxon>
        <taxon>Synechococcales</taxon>
        <taxon>Synechococcaceae</taxon>
        <taxon>Synechococcus</taxon>
    </lineage>
</organism>
<protein>
    <recommendedName>
        <fullName evidence="1">Small ribosomal subunit protein uS9</fullName>
    </recommendedName>
    <alternativeName>
        <fullName evidence="3">30S ribosomal protein S9</fullName>
    </alternativeName>
</protein>
<comment type="similarity">
    <text evidence="1">Belongs to the universal ribosomal protein uS9 family.</text>
</comment>
<proteinExistence type="inferred from homology"/>
<accession>Q0ID32</accession>
<sequence length="135" mass="14741">MSSSNNTVVYWGTGRRKTSVARVRLVPGNGTITINGRPGDNYLNYNPAYLAAVKAPLQTLGLSTEYDVLVNVRGGGLTGQADAIKQGAARALCELSVDNRKPLKTEGHLSRDPRAKERRKYGLKKARKAPQFSKR</sequence>